<sequence length="234" mass="25319">MKIIRVQDQLEGGKVAFSLLKESLAEGATTLGLATGSTPITFYQELVNSDLDCSALTSINLDEYVGLPVENDQSYDYFMRDQLFNAKPFKESFLPNGLADDLEAEVKRYDQVIAEHPIDFQILGIGRNGHIGFNEPGTPFAEKTHVVDLQASTIEANSRFFASIDDVPKQAISMGIASIMASKMIVLLAFGKEKAAAIKGMVSGPVTEALPASVLQQHDHVVVIVDEAAASELD</sequence>
<name>NAGB_STRS7</name>
<keyword id="KW-0119">Carbohydrate metabolism</keyword>
<keyword id="KW-0378">Hydrolase</keyword>
<reference key="1">
    <citation type="journal article" date="2009" name="PLoS Pathog.">
        <title>Genomic evidence for the evolution of Streptococcus equi: host restriction, increased virulence, and genetic exchange with human pathogens.</title>
        <authorList>
            <person name="Holden M.T.G."/>
            <person name="Heather Z."/>
            <person name="Paillot R."/>
            <person name="Steward K.F."/>
            <person name="Webb K."/>
            <person name="Ainslie F."/>
            <person name="Jourdan T."/>
            <person name="Bason N.C."/>
            <person name="Holroyd N.E."/>
            <person name="Mungall K."/>
            <person name="Quail M.A."/>
            <person name="Sanders M."/>
            <person name="Simmonds M."/>
            <person name="Willey D."/>
            <person name="Brooks K."/>
            <person name="Aanensen D.M."/>
            <person name="Spratt B.G."/>
            <person name="Jolley K.A."/>
            <person name="Maiden M.C.J."/>
            <person name="Kehoe M."/>
            <person name="Chanter N."/>
            <person name="Bentley S.D."/>
            <person name="Robinson C."/>
            <person name="Maskell D.J."/>
            <person name="Parkhill J."/>
            <person name="Waller A.S."/>
        </authorList>
    </citation>
    <scope>NUCLEOTIDE SEQUENCE [LARGE SCALE GENOMIC DNA]</scope>
    <source>
        <strain>H70</strain>
    </source>
</reference>
<proteinExistence type="inferred from homology"/>
<evidence type="ECO:0000255" key="1">
    <source>
        <dbReference type="HAMAP-Rule" id="MF_01241"/>
    </source>
</evidence>
<comment type="function">
    <text evidence="1">Catalyzes the reversible isomerization-deamination of glucosamine 6-phosphate (GlcN6P) to form fructose 6-phosphate (Fru6P) and ammonium ion.</text>
</comment>
<comment type="catalytic activity">
    <reaction evidence="1">
        <text>alpha-D-glucosamine 6-phosphate + H2O = beta-D-fructose 6-phosphate + NH4(+)</text>
        <dbReference type="Rhea" id="RHEA:12172"/>
        <dbReference type="ChEBI" id="CHEBI:15377"/>
        <dbReference type="ChEBI" id="CHEBI:28938"/>
        <dbReference type="ChEBI" id="CHEBI:57634"/>
        <dbReference type="ChEBI" id="CHEBI:75989"/>
        <dbReference type="EC" id="3.5.99.6"/>
    </reaction>
</comment>
<comment type="pathway">
    <text evidence="1">Amino-sugar metabolism; N-acetylneuraminate degradation; D-fructose 6-phosphate from N-acetylneuraminate: step 5/5.</text>
</comment>
<comment type="similarity">
    <text evidence="1">Belongs to the glucosamine/galactosamine-6-phosphate isomerase family. NagB subfamily.</text>
</comment>
<gene>
    <name evidence="1" type="primary">nagB</name>
    <name type="ordered locus">SZO_13390</name>
</gene>
<dbReference type="EC" id="3.5.99.6" evidence="1"/>
<dbReference type="EMBL" id="FM204884">
    <property type="protein sequence ID" value="CAW99892.1"/>
    <property type="molecule type" value="Genomic_DNA"/>
</dbReference>
<dbReference type="SMR" id="C0MCU1"/>
<dbReference type="KEGG" id="seq:SZO_13390"/>
<dbReference type="eggNOG" id="COG0363">
    <property type="taxonomic scope" value="Bacteria"/>
</dbReference>
<dbReference type="HOGENOM" id="CLU_049611_1_0_9"/>
<dbReference type="UniPathway" id="UPA00629">
    <property type="reaction ID" value="UER00684"/>
</dbReference>
<dbReference type="Proteomes" id="UP000001368">
    <property type="component" value="Chromosome"/>
</dbReference>
<dbReference type="GO" id="GO:0005737">
    <property type="term" value="C:cytoplasm"/>
    <property type="evidence" value="ECO:0007669"/>
    <property type="project" value="TreeGrafter"/>
</dbReference>
<dbReference type="GO" id="GO:0004342">
    <property type="term" value="F:glucosamine-6-phosphate deaminase activity"/>
    <property type="evidence" value="ECO:0007669"/>
    <property type="project" value="UniProtKB-UniRule"/>
</dbReference>
<dbReference type="GO" id="GO:0042802">
    <property type="term" value="F:identical protein binding"/>
    <property type="evidence" value="ECO:0007669"/>
    <property type="project" value="TreeGrafter"/>
</dbReference>
<dbReference type="GO" id="GO:0005975">
    <property type="term" value="P:carbohydrate metabolic process"/>
    <property type="evidence" value="ECO:0007669"/>
    <property type="project" value="InterPro"/>
</dbReference>
<dbReference type="GO" id="GO:0006043">
    <property type="term" value="P:glucosamine catabolic process"/>
    <property type="evidence" value="ECO:0007669"/>
    <property type="project" value="TreeGrafter"/>
</dbReference>
<dbReference type="GO" id="GO:0006046">
    <property type="term" value="P:N-acetylglucosamine catabolic process"/>
    <property type="evidence" value="ECO:0007669"/>
    <property type="project" value="TreeGrafter"/>
</dbReference>
<dbReference type="GO" id="GO:0019262">
    <property type="term" value="P:N-acetylneuraminate catabolic process"/>
    <property type="evidence" value="ECO:0007669"/>
    <property type="project" value="UniProtKB-UniRule"/>
</dbReference>
<dbReference type="CDD" id="cd01399">
    <property type="entry name" value="GlcN6P_deaminase"/>
    <property type="match status" value="1"/>
</dbReference>
<dbReference type="FunFam" id="3.40.50.1360:FF:000003">
    <property type="entry name" value="Glucosamine-6-phosphate deaminase"/>
    <property type="match status" value="1"/>
</dbReference>
<dbReference type="Gene3D" id="3.40.50.1360">
    <property type="match status" value="1"/>
</dbReference>
<dbReference type="HAMAP" id="MF_01241">
    <property type="entry name" value="GlcN6P_deamin"/>
    <property type="match status" value="1"/>
</dbReference>
<dbReference type="InterPro" id="IPR006148">
    <property type="entry name" value="Glc/Gal-6P_isomerase"/>
</dbReference>
<dbReference type="InterPro" id="IPR004547">
    <property type="entry name" value="Glucosamine6P_isomerase"/>
</dbReference>
<dbReference type="InterPro" id="IPR018321">
    <property type="entry name" value="Glucosamine6P_isomerase_CS"/>
</dbReference>
<dbReference type="InterPro" id="IPR037171">
    <property type="entry name" value="NagB/RpiA_transferase-like"/>
</dbReference>
<dbReference type="PANTHER" id="PTHR11280">
    <property type="entry name" value="GLUCOSAMINE-6-PHOSPHATE ISOMERASE"/>
    <property type="match status" value="1"/>
</dbReference>
<dbReference type="PANTHER" id="PTHR11280:SF5">
    <property type="entry name" value="GLUCOSAMINE-6-PHOSPHATE ISOMERASE"/>
    <property type="match status" value="1"/>
</dbReference>
<dbReference type="Pfam" id="PF01182">
    <property type="entry name" value="Glucosamine_iso"/>
    <property type="match status" value="1"/>
</dbReference>
<dbReference type="SUPFAM" id="SSF100950">
    <property type="entry name" value="NagB/RpiA/CoA transferase-like"/>
    <property type="match status" value="1"/>
</dbReference>
<dbReference type="PROSITE" id="PS01161">
    <property type="entry name" value="GLC_GALNAC_ISOMERASE"/>
    <property type="match status" value="1"/>
</dbReference>
<organism>
    <name type="scientific">Streptococcus equi subsp. zooepidemicus (strain H70)</name>
    <dbReference type="NCBI Taxonomy" id="553483"/>
    <lineage>
        <taxon>Bacteria</taxon>
        <taxon>Bacillati</taxon>
        <taxon>Bacillota</taxon>
        <taxon>Bacilli</taxon>
        <taxon>Lactobacillales</taxon>
        <taxon>Streptococcaceae</taxon>
        <taxon>Streptococcus</taxon>
    </lineage>
</organism>
<accession>C0MCU1</accession>
<protein>
    <recommendedName>
        <fullName evidence="1">Glucosamine-6-phosphate deaminase</fullName>
        <ecNumber evidence="1">3.5.99.6</ecNumber>
    </recommendedName>
    <alternativeName>
        <fullName evidence="1">GlcN6P deaminase</fullName>
        <shortName evidence="1">GNPDA</shortName>
    </alternativeName>
    <alternativeName>
        <fullName evidence="1">Glucosamine-6-phosphate isomerase</fullName>
    </alternativeName>
</protein>
<feature type="chain" id="PRO_1000214088" description="Glucosamine-6-phosphate deaminase">
    <location>
        <begin position="1"/>
        <end position="234"/>
    </location>
</feature>
<feature type="active site" description="Proton acceptor; for enolization step" evidence="1">
    <location>
        <position position="62"/>
    </location>
</feature>
<feature type="active site" description="For ring-opening step" evidence="1">
    <location>
        <position position="128"/>
    </location>
</feature>
<feature type="active site" description="Proton acceptor; for ring-opening step" evidence="1">
    <location>
        <position position="130"/>
    </location>
</feature>
<feature type="active site" description="For ring-opening step" evidence="1">
    <location>
        <position position="135"/>
    </location>
</feature>